<keyword id="KW-0963">Cytoplasm</keyword>
<keyword id="KW-0378">Hydrolase</keyword>
<keyword id="KW-0694">RNA-binding</keyword>
<keyword id="KW-0820">tRNA-binding</keyword>
<sequence length="185" mass="20827">MLLVIGLGNPGKEYQYTRHNVGFIAIEKIANQYNSSFSTKKKFNCEIAETISYGQKIIFIKPTTYMNLSGKSVISVKTYYNIYPAKSFVIHDDIDLETGRVKFKTGGGNGGHNGLKSIDGVIGNNYNRIRIGVGRPQNNQDLADYVLNHFSKPEYKTVMQAIDRITSNFGLILENKLEEFKNKMA</sequence>
<protein>
    <recommendedName>
        <fullName evidence="1">Peptidyl-tRNA hydrolase</fullName>
        <shortName evidence="1">Pth</shortName>
        <ecNumber evidence="1">3.1.1.29</ecNumber>
    </recommendedName>
</protein>
<reference key="1">
    <citation type="submission" date="2007-09" db="EMBL/GenBank/DDBJ databases">
        <title>Complete genome sequence of Rickettsia rickettsii.</title>
        <authorList>
            <person name="Madan A."/>
            <person name="Fahey J."/>
            <person name="Helton E."/>
            <person name="Ketteman M."/>
            <person name="Madan A."/>
            <person name="Rodrigues S."/>
            <person name="Sanchez A."/>
            <person name="Dasch G."/>
            <person name="Eremeeva M."/>
        </authorList>
    </citation>
    <scope>NUCLEOTIDE SEQUENCE [LARGE SCALE GENOMIC DNA]</scope>
    <source>
        <strain>Sheila Smith</strain>
    </source>
</reference>
<proteinExistence type="inferred from homology"/>
<evidence type="ECO:0000255" key="1">
    <source>
        <dbReference type="HAMAP-Rule" id="MF_00083"/>
    </source>
</evidence>
<accession>A8GSZ4</accession>
<name>PTH_RICRS</name>
<comment type="function">
    <text evidence="1">Hydrolyzes ribosome-free peptidyl-tRNAs (with 1 or more amino acids incorporated), which drop off the ribosome during protein synthesis, or as a result of ribosome stalling.</text>
</comment>
<comment type="function">
    <text evidence="1">Catalyzes the release of premature peptidyl moieties from peptidyl-tRNA molecules trapped in stalled 50S ribosomal subunits, and thus maintains levels of free tRNAs and 50S ribosomes.</text>
</comment>
<comment type="catalytic activity">
    <reaction evidence="1">
        <text>an N-acyl-L-alpha-aminoacyl-tRNA + H2O = an N-acyl-L-amino acid + a tRNA + H(+)</text>
        <dbReference type="Rhea" id="RHEA:54448"/>
        <dbReference type="Rhea" id="RHEA-COMP:10123"/>
        <dbReference type="Rhea" id="RHEA-COMP:13883"/>
        <dbReference type="ChEBI" id="CHEBI:15377"/>
        <dbReference type="ChEBI" id="CHEBI:15378"/>
        <dbReference type="ChEBI" id="CHEBI:59874"/>
        <dbReference type="ChEBI" id="CHEBI:78442"/>
        <dbReference type="ChEBI" id="CHEBI:138191"/>
        <dbReference type="EC" id="3.1.1.29"/>
    </reaction>
</comment>
<comment type="subunit">
    <text evidence="1">Monomer.</text>
</comment>
<comment type="subcellular location">
    <subcellularLocation>
        <location evidence="1">Cytoplasm</location>
    </subcellularLocation>
</comment>
<comment type="similarity">
    <text evidence="1">Belongs to the PTH family.</text>
</comment>
<organism>
    <name type="scientific">Rickettsia rickettsii (strain Sheila Smith)</name>
    <dbReference type="NCBI Taxonomy" id="392021"/>
    <lineage>
        <taxon>Bacteria</taxon>
        <taxon>Pseudomonadati</taxon>
        <taxon>Pseudomonadota</taxon>
        <taxon>Alphaproteobacteria</taxon>
        <taxon>Rickettsiales</taxon>
        <taxon>Rickettsiaceae</taxon>
        <taxon>Rickettsieae</taxon>
        <taxon>Rickettsia</taxon>
        <taxon>spotted fever group</taxon>
    </lineage>
</organism>
<dbReference type="EC" id="3.1.1.29" evidence="1"/>
<dbReference type="EMBL" id="CP000848">
    <property type="protein sequence ID" value="ABV76519.1"/>
    <property type="molecule type" value="Genomic_DNA"/>
</dbReference>
<dbReference type="RefSeq" id="WP_012151089.1">
    <property type="nucleotide sequence ID" value="NZ_CP121767.1"/>
</dbReference>
<dbReference type="SMR" id="A8GSZ4"/>
<dbReference type="GeneID" id="79937603"/>
<dbReference type="KEGG" id="rri:A1G_05130"/>
<dbReference type="HOGENOM" id="CLU_062456_2_2_5"/>
<dbReference type="Proteomes" id="UP000006832">
    <property type="component" value="Chromosome"/>
</dbReference>
<dbReference type="GO" id="GO:0005737">
    <property type="term" value="C:cytoplasm"/>
    <property type="evidence" value="ECO:0007669"/>
    <property type="project" value="UniProtKB-SubCell"/>
</dbReference>
<dbReference type="GO" id="GO:0004045">
    <property type="term" value="F:peptidyl-tRNA hydrolase activity"/>
    <property type="evidence" value="ECO:0007669"/>
    <property type="project" value="UniProtKB-UniRule"/>
</dbReference>
<dbReference type="GO" id="GO:0000049">
    <property type="term" value="F:tRNA binding"/>
    <property type="evidence" value="ECO:0007669"/>
    <property type="project" value="UniProtKB-UniRule"/>
</dbReference>
<dbReference type="GO" id="GO:0006515">
    <property type="term" value="P:protein quality control for misfolded or incompletely synthesized proteins"/>
    <property type="evidence" value="ECO:0007669"/>
    <property type="project" value="UniProtKB-UniRule"/>
</dbReference>
<dbReference type="GO" id="GO:0072344">
    <property type="term" value="P:rescue of stalled ribosome"/>
    <property type="evidence" value="ECO:0007669"/>
    <property type="project" value="UniProtKB-UniRule"/>
</dbReference>
<dbReference type="CDD" id="cd00462">
    <property type="entry name" value="PTH"/>
    <property type="match status" value="1"/>
</dbReference>
<dbReference type="FunFam" id="3.40.50.1470:FF:000001">
    <property type="entry name" value="Peptidyl-tRNA hydrolase"/>
    <property type="match status" value="1"/>
</dbReference>
<dbReference type="Gene3D" id="3.40.50.1470">
    <property type="entry name" value="Peptidyl-tRNA hydrolase"/>
    <property type="match status" value="1"/>
</dbReference>
<dbReference type="HAMAP" id="MF_00083">
    <property type="entry name" value="Pept_tRNA_hydro_bact"/>
    <property type="match status" value="1"/>
</dbReference>
<dbReference type="InterPro" id="IPR001328">
    <property type="entry name" value="Pept_tRNA_hydro"/>
</dbReference>
<dbReference type="InterPro" id="IPR018171">
    <property type="entry name" value="Pept_tRNA_hydro_CS"/>
</dbReference>
<dbReference type="InterPro" id="IPR036416">
    <property type="entry name" value="Pept_tRNA_hydro_sf"/>
</dbReference>
<dbReference type="NCBIfam" id="TIGR00447">
    <property type="entry name" value="pth"/>
    <property type="match status" value="1"/>
</dbReference>
<dbReference type="PANTHER" id="PTHR17224">
    <property type="entry name" value="PEPTIDYL-TRNA HYDROLASE"/>
    <property type="match status" value="1"/>
</dbReference>
<dbReference type="PANTHER" id="PTHR17224:SF1">
    <property type="entry name" value="PEPTIDYL-TRNA HYDROLASE"/>
    <property type="match status" value="1"/>
</dbReference>
<dbReference type="Pfam" id="PF01195">
    <property type="entry name" value="Pept_tRNA_hydro"/>
    <property type="match status" value="1"/>
</dbReference>
<dbReference type="SUPFAM" id="SSF53178">
    <property type="entry name" value="Peptidyl-tRNA hydrolase-like"/>
    <property type="match status" value="1"/>
</dbReference>
<dbReference type="PROSITE" id="PS01195">
    <property type="entry name" value="PEPT_TRNA_HYDROL_1"/>
    <property type="match status" value="1"/>
</dbReference>
<dbReference type="PROSITE" id="PS01196">
    <property type="entry name" value="PEPT_TRNA_HYDROL_2"/>
    <property type="match status" value="1"/>
</dbReference>
<gene>
    <name evidence="1" type="primary">pth</name>
    <name type="ordered locus">A1G_05130</name>
</gene>
<feature type="chain" id="PRO_1000010643" description="Peptidyl-tRNA hydrolase">
    <location>
        <begin position="1"/>
        <end position="185"/>
    </location>
</feature>
<feature type="active site" description="Proton acceptor" evidence="1">
    <location>
        <position position="19"/>
    </location>
</feature>
<feature type="binding site" evidence="1">
    <location>
        <position position="14"/>
    </location>
    <ligand>
        <name>tRNA</name>
        <dbReference type="ChEBI" id="CHEBI:17843"/>
    </ligand>
</feature>
<feature type="binding site" evidence="1">
    <location>
        <position position="65"/>
    </location>
    <ligand>
        <name>tRNA</name>
        <dbReference type="ChEBI" id="CHEBI:17843"/>
    </ligand>
</feature>
<feature type="binding site" evidence="1">
    <location>
        <position position="67"/>
    </location>
    <ligand>
        <name>tRNA</name>
        <dbReference type="ChEBI" id="CHEBI:17843"/>
    </ligand>
</feature>
<feature type="binding site" evidence="1">
    <location>
        <position position="113"/>
    </location>
    <ligand>
        <name>tRNA</name>
        <dbReference type="ChEBI" id="CHEBI:17843"/>
    </ligand>
</feature>
<feature type="site" description="Discriminates between blocked and unblocked aminoacyl-tRNA" evidence="1">
    <location>
        <position position="9"/>
    </location>
</feature>
<feature type="site" description="Stabilizes the basic form of H active site to accept a proton" evidence="1">
    <location>
        <position position="92"/>
    </location>
</feature>